<dbReference type="EC" id="3.1.26.4"/>
<dbReference type="EMBL" id="AF048995">
    <property type="protein sequence ID" value="AAC78564.1"/>
    <property type="molecule type" value="mRNA"/>
</dbReference>
<dbReference type="EMBL" id="AF048994">
    <property type="protein sequence ID" value="AAC78563.1"/>
    <property type="molecule type" value="mRNA"/>
</dbReference>
<dbReference type="EMBL" id="AF039652">
    <property type="protein sequence ID" value="AAC09261.1"/>
    <property type="molecule type" value="mRNA"/>
</dbReference>
<dbReference type="EMBL" id="AJ224117">
    <property type="protein sequence ID" value="CAA11835.1"/>
    <property type="molecule type" value="mRNA"/>
</dbReference>
<dbReference type="EMBL" id="CR541820">
    <property type="protein sequence ID" value="CAG46619.1"/>
    <property type="molecule type" value="mRNA"/>
</dbReference>
<dbReference type="EMBL" id="BT019670">
    <property type="protein sequence ID" value="AAV38476.1"/>
    <property type="molecule type" value="mRNA"/>
</dbReference>
<dbReference type="EMBL" id="AK075490">
    <property type="protein sequence ID" value="BAG52156.1"/>
    <property type="molecule type" value="mRNA"/>
</dbReference>
<dbReference type="EMBL" id="AC108488">
    <property type="protein sequence ID" value="AAX82026.1"/>
    <property type="molecule type" value="Genomic_DNA"/>
</dbReference>
<dbReference type="EMBL" id="CH471053">
    <property type="protein sequence ID" value="EAX01061.1"/>
    <property type="molecule type" value="Genomic_DNA"/>
</dbReference>
<dbReference type="EMBL" id="BC002973">
    <property type="protein sequence ID" value="AAH02973.1"/>
    <property type="molecule type" value="mRNA"/>
</dbReference>
<dbReference type="CCDS" id="CCDS1647.1"/>
<dbReference type="RefSeq" id="NP_002927.2">
    <property type="nucleotide sequence ID" value="NM_002936.4"/>
</dbReference>
<dbReference type="PDB" id="2QK9">
    <property type="method" value="X-ray"/>
    <property type="resolution" value="2.55 A"/>
    <property type="chains" value="A=136-286"/>
</dbReference>
<dbReference type="PDB" id="2QKB">
    <property type="method" value="X-ray"/>
    <property type="resolution" value="2.40 A"/>
    <property type="chains" value="A/B=136-286"/>
</dbReference>
<dbReference type="PDB" id="2QKK">
    <property type="method" value="X-ray"/>
    <property type="resolution" value="3.20 A"/>
    <property type="chains" value="A/B/E/F/I/J/M/N/R/S/W=136-286"/>
</dbReference>
<dbReference type="PDB" id="3BSU">
    <property type="method" value="X-ray"/>
    <property type="resolution" value="2.10 A"/>
    <property type="chains" value="A/B/C/F/G/H=27-76"/>
</dbReference>
<dbReference type="PDB" id="6VRD">
    <property type="method" value="X-ray"/>
    <property type="resolution" value="1.30 A"/>
    <property type="chains" value="A=1-286"/>
</dbReference>
<dbReference type="PDB" id="8SWB">
    <property type="method" value="X-ray"/>
    <property type="resolution" value="2.00 A"/>
    <property type="chains" value="A=137-285"/>
</dbReference>
<dbReference type="PDB" id="8SWC">
    <property type="method" value="X-ray"/>
    <property type="resolution" value="2.68 A"/>
    <property type="chains" value="A=1-286"/>
</dbReference>
<dbReference type="PDBsum" id="2QK9"/>
<dbReference type="PDBsum" id="2QKB"/>
<dbReference type="PDBsum" id="2QKK"/>
<dbReference type="PDBsum" id="3BSU"/>
<dbReference type="PDBsum" id="6VRD"/>
<dbReference type="PDBsum" id="8SWB"/>
<dbReference type="PDBsum" id="8SWC"/>
<dbReference type="SMR" id="O60930"/>
<dbReference type="BioGRID" id="128882">
    <property type="interactions" value="53"/>
</dbReference>
<dbReference type="FunCoup" id="O60930">
    <property type="interactions" value="1540"/>
</dbReference>
<dbReference type="IntAct" id="O60930">
    <property type="interactions" value="39"/>
</dbReference>
<dbReference type="MINT" id="O60930"/>
<dbReference type="STRING" id="9606.ENSP00000313350"/>
<dbReference type="BindingDB" id="O60930"/>
<dbReference type="ChEMBL" id="CHEMBL5893"/>
<dbReference type="iPTMnet" id="O60930"/>
<dbReference type="PhosphoSitePlus" id="O60930"/>
<dbReference type="BioMuta" id="RNASEH1"/>
<dbReference type="jPOST" id="O60930"/>
<dbReference type="MassIVE" id="O60930"/>
<dbReference type="PaxDb" id="9606-ENSP00000313350"/>
<dbReference type="PeptideAtlas" id="O60930"/>
<dbReference type="ProteomicsDB" id="49675"/>
<dbReference type="Pumba" id="O60930"/>
<dbReference type="Antibodypedia" id="35292">
    <property type="antibodies" value="135 antibodies from 25 providers"/>
</dbReference>
<dbReference type="DNASU" id="246243"/>
<dbReference type="Ensembl" id="ENST00000315212.4">
    <property type="protein sequence ID" value="ENSP00000313350.3"/>
    <property type="gene ID" value="ENSG00000171865.10"/>
</dbReference>
<dbReference type="GeneID" id="246243"/>
<dbReference type="KEGG" id="hsa:246243"/>
<dbReference type="MANE-Select" id="ENST00000315212.4">
    <property type="protein sequence ID" value="ENSP00000313350.3"/>
    <property type="RefSeq nucleotide sequence ID" value="NM_002936.6"/>
    <property type="RefSeq protein sequence ID" value="NP_002927.2"/>
</dbReference>
<dbReference type="UCSC" id="uc002qxt.5">
    <property type="organism name" value="human"/>
</dbReference>
<dbReference type="AGR" id="HGNC:18466"/>
<dbReference type="CTD" id="246243"/>
<dbReference type="DisGeNET" id="246243"/>
<dbReference type="GeneCards" id="RNASEH1"/>
<dbReference type="HGNC" id="HGNC:18466">
    <property type="gene designation" value="RNASEH1"/>
</dbReference>
<dbReference type="HPA" id="ENSG00000171865">
    <property type="expression patterns" value="Low tissue specificity"/>
</dbReference>
<dbReference type="MalaCards" id="RNASEH1"/>
<dbReference type="MIM" id="604123">
    <property type="type" value="gene"/>
</dbReference>
<dbReference type="MIM" id="616479">
    <property type="type" value="phenotype"/>
</dbReference>
<dbReference type="neXtProt" id="NX_O60930"/>
<dbReference type="OpenTargets" id="ENSG00000171865"/>
<dbReference type="Orphanet" id="329336">
    <property type="disease" value="Adult-onset chronic progressive external ophthalmoplegia with mitochondrial myopathy"/>
</dbReference>
<dbReference type="PharmGKB" id="PA38543"/>
<dbReference type="VEuPathDB" id="HostDB:ENSG00000171865"/>
<dbReference type="eggNOG" id="KOG3752">
    <property type="taxonomic scope" value="Eukaryota"/>
</dbReference>
<dbReference type="GeneTree" id="ENSGT00390000003466"/>
<dbReference type="HOGENOM" id="CLU_030894_0_2_1"/>
<dbReference type="InParanoid" id="O60930"/>
<dbReference type="OMA" id="ELWYGLY"/>
<dbReference type="OrthoDB" id="407198at2759"/>
<dbReference type="PAN-GO" id="O60930">
    <property type="GO annotations" value="3 GO annotations based on evolutionary models"/>
</dbReference>
<dbReference type="PhylomeDB" id="O60930"/>
<dbReference type="TreeFam" id="TF313356"/>
<dbReference type="BRENDA" id="3.1.26.4">
    <property type="organism ID" value="2681"/>
</dbReference>
<dbReference type="PathwayCommons" id="O60930"/>
<dbReference type="Reactome" id="R-HSA-9913635">
    <property type="pathway name" value="Strand-asynchronous mitochondrial DNA replication"/>
</dbReference>
<dbReference type="SignaLink" id="O60930"/>
<dbReference type="BioGRID-ORCS" id="246243">
    <property type="hits" value="73 hits in 1154 CRISPR screens"/>
</dbReference>
<dbReference type="CD-CODE" id="DEE660B4">
    <property type="entry name" value="Stress granule"/>
</dbReference>
<dbReference type="ChiTaRS" id="RNASEH1">
    <property type="organism name" value="human"/>
</dbReference>
<dbReference type="EvolutionaryTrace" id="O60930"/>
<dbReference type="GeneWiki" id="RNASEH1"/>
<dbReference type="GenomeRNAi" id="246243"/>
<dbReference type="Pharos" id="O60930">
    <property type="development level" value="Tchem"/>
</dbReference>
<dbReference type="PRO" id="PR:O60930"/>
<dbReference type="Proteomes" id="UP000005640">
    <property type="component" value="Chromosome 2"/>
</dbReference>
<dbReference type="RNAct" id="O60930">
    <property type="molecule type" value="protein"/>
</dbReference>
<dbReference type="Bgee" id="ENSG00000171865">
    <property type="expression patterns" value="Expressed in secondary oocyte and 196 other cell types or tissues"/>
</dbReference>
<dbReference type="ExpressionAtlas" id="O60930">
    <property type="expression patterns" value="baseline and differential"/>
</dbReference>
<dbReference type="GO" id="GO:0005759">
    <property type="term" value="C:mitochondrial matrix"/>
    <property type="evidence" value="ECO:0000304"/>
    <property type="project" value="Reactome"/>
</dbReference>
<dbReference type="GO" id="GO:0005739">
    <property type="term" value="C:mitochondrion"/>
    <property type="evidence" value="ECO:0006056"/>
    <property type="project" value="FlyBase"/>
</dbReference>
<dbReference type="GO" id="GO:0000287">
    <property type="term" value="F:magnesium ion binding"/>
    <property type="evidence" value="ECO:0007669"/>
    <property type="project" value="InterPro"/>
</dbReference>
<dbReference type="GO" id="GO:0003676">
    <property type="term" value="F:nucleic acid binding"/>
    <property type="evidence" value="ECO:0000304"/>
    <property type="project" value="ProtInc"/>
</dbReference>
<dbReference type="GO" id="GO:0003723">
    <property type="term" value="F:RNA binding"/>
    <property type="evidence" value="ECO:0000304"/>
    <property type="project" value="ProtInc"/>
</dbReference>
<dbReference type="GO" id="GO:0004540">
    <property type="term" value="F:RNA nuclease activity"/>
    <property type="evidence" value="ECO:0000304"/>
    <property type="project" value="ProtInc"/>
</dbReference>
<dbReference type="GO" id="GO:0004523">
    <property type="term" value="F:RNA-DNA hybrid ribonuclease activity"/>
    <property type="evidence" value="ECO:0000314"/>
    <property type="project" value="UniProtKB"/>
</dbReference>
<dbReference type="GO" id="GO:0043137">
    <property type="term" value="P:DNA replication, removal of RNA primer"/>
    <property type="evidence" value="ECO:0000318"/>
    <property type="project" value="GO_Central"/>
</dbReference>
<dbReference type="GO" id="GO:0006401">
    <property type="term" value="P:RNA catabolic process"/>
    <property type="evidence" value="ECO:0000304"/>
    <property type="project" value="ProtInc"/>
</dbReference>
<dbReference type="CDD" id="cd09280">
    <property type="entry name" value="RNase_HI_eukaryote_like"/>
    <property type="match status" value="1"/>
</dbReference>
<dbReference type="FunFam" id="3.30.420.10:FF:000049">
    <property type="entry name" value="Ribonuclease H1"/>
    <property type="match status" value="1"/>
</dbReference>
<dbReference type="FunFam" id="3.40.970.10:FF:000001">
    <property type="entry name" value="Ribonuclease H1"/>
    <property type="match status" value="1"/>
</dbReference>
<dbReference type="Gene3D" id="3.30.420.10">
    <property type="entry name" value="Ribonuclease H-like superfamily/Ribonuclease H"/>
    <property type="match status" value="1"/>
</dbReference>
<dbReference type="Gene3D" id="3.40.970.10">
    <property type="entry name" value="Ribonuclease H1, N-terminal domain"/>
    <property type="match status" value="1"/>
</dbReference>
<dbReference type="InterPro" id="IPR009027">
    <property type="entry name" value="Ribosomal_bL9/RNase_H1_N"/>
</dbReference>
<dbReference type="InterPro" id="IPR050092">
    <property type="entry name" value="RNase_H"/>
</dbReference>
<dbReference type="InterPro" id="IPR017067">
    <property type="entry name" value="RNase_H1_euk"/>
</dbReference>
<dbReference type="InterPro" id="IPR011320">
    <property type="entry name" value="RNase_H1_N"/>
</dbReference>
<dbReference type="InterPro" id="IPR037056">
    <property type="entry name" value="RNase_H1_N_sf"/>
</dbReference>
<dbReference type="InterPro" id="IPR012337">
    <property type="entry name" value="RNaseH-like_sf"/>
</dbReference>
<dbReference type="InterPro" id="IPR002156">
    <property type="entry name" value="RNaseH_domain"/>
</dbReference>
<dbReference type="InterPro" id="IPR036397">
    <property type="entry name" value="RNaseH_sf"/>
</dbReference>
<dbReference type="PANTHER" id="PTHR10642">
    <property type="entry name" value="RIBONUCLEASE H1"/>
    <property type="match status" value="1"/>
</dbReference>
<dbReference type="PANTHER" id="PTHR10642:SF26">
    <property type="entry name" value="RIBONUCLEASE H1"/>
    <property type="match status" value="1"/>
</dbReference>
<dbReference type="Pfam" id="PF01693">
    <property type="entry name" value="Cauli_VI"/>
    <property type="match status" value="1"/>
</dbReference>
<dbReference type="Pfam" id="PF00075">
    <property type="entry name" value="RNase_H"/>
    <property type="match status" value="1"/>
</dbReference>
<dbReference type="PIRSF" id="PIRSF036852">
    <property type="entry name" value="Ribonuclease_H1_euk"/>
    <property type="match status" value="1"/>
</dbReference>
<dbReference type="SUPFAM" id="SSF55658">
    <property type="entry name" value="L9 N-domain-like"/>
    <property type="match status" value="1"/>
</dbReference>
<dbReference type="SUPFAM" id="SSF53098">
    <property type="entry name" value="Ribonuclease H-like"/>
    <property type="match status" value="1"/>
</dbReference>
<dbReference type="PROSITE" id="PS50879">
    <property type="entry name" value="RNASE_H_1"/>
    <property type="match status" value="1"/>
</dbReference>
<comment type="function">
    <text evidence="3 4">Endonuclease that specifically degrades the RNA of RNA-DNA hybrids (PubMed:10497183). Plays a role in RNA polymerase II (RNAp II) transcription termination by degrading R-loop RNA-DNA hybrid formation at G-rich pause sites located downstream of the poly(A) site and behind the elongating RNAp II (PubMed:21700224).</text>
</comment>
<comment type="catalytic activity">
    <reaction evidence="1">
        <text>Endonucleolytic cleavage to 5'-phosphomonoester.</text>
        <dbReference type="EC" id="3.1.26.4"/>
    </reaction>
</comment>
<comment type="cofactor">
    <cofactor>
        <name>Mg(2+)</name>
        <dbReference type="ChEBI" id="CHEBI:18420"/>
    </cofactor>
    <text>Binds 1 Mg(2+) ion per subunit. May bind a second metal ion at a regulatory site, or after substrate binding.</text>
</comment>
<comment type="activity regulation">
    <text>In the presence of magnesium, manganese is inhibitory.</text>
</comment>
<comment type="subunit">
    <text evidence="8">Monomer.</text>
</comment>
<comment type="interaction">
    <interactant intactId="EBI-2372399">
        <id>O60930</id>
    </interactant>
    <interactant intactId="EBI-12092171">
        <id>Q12797-6</id>
        <label>ASPH</label>
    </interactant>
    <organismsDiffer>false</organismsDiffer>
    <experiments>3</experiments>
</comment>
<comment type="interaction">
    <interactant intactId="EBI-2372399">
        <id>O60930</id>
    </interactant>
    <interactant intactId="EBI-489887">
        <id>P50402</id>
        <label>EMD</label>
    </interactant>
    <organismsDiffer>false</organismsDiffer>
    <experiments>3</experiments>
</comment>
<comment type="interaction">
    <interactant intactId="EBI-2372399">
        <id>O60930</id>
    </interactant>
    <interactant intactId="EBI-2876774">
        <id>Q92520</id>
        <label>FAM3C</label>
    </interactant>
    <organismsDiffer>false</organismsDiffer>
    <experiments>3</experiments>
</comment>
<comment type="interaction">
    <interactant intactId="EBI-2372399">
        <id>O60930</id>
    </interactant>
    <interactant intactId="EBI-473747">
        <id>Q9NQ29</id>
        <label>LUC7L</label>
    </interactant>
    <organismsDiffer>false</organismsDiffer>
    <experiments>2</experiments>
</comment>
<comment type="interaction">
    <interactant intactId="EBI-2372399">
        <id>O60930</id>
    </interactant>
    <interactant intactId="EBI-746987">
        <id>P62166</id>
        <label>NCS1</label>
    </interactant>
    <organismsDiffer>false</organismsDiffer>
    <experiments>3</experiments>
</comment>
<comment type="interaction">
    <interactant intactId="EBI-2372399">
        <id>O60930</id>
    </interactant>
    <interactant intactId="EBI-10262547">
        <id>Q8IXM6</id>
        <label>NRM</label>
    </interactant>
    <organismsDiffer>false</organismsDiffer>
    <experiments>3</experiments>
</comment>
<comment type="interaction">
    <interactant intactId="EBI-2372399">
        <id>O60930</id>
    </interactant>
    <interactant intactId="EBI-723946">
        <id>P17152</id>
        <label>TMEM11</label>
    </interactant>
    <organismsDiffer>false</organismsDiffer>
    <experiments>3</experiments>
</comment>
<comment type="subcellular location">
    <subcellularLocation>
        <location evidence="8">Cytoplasm</location>
    </subcellularLocation>
</comment>
<comment type="tissue specificity">
    <text>Ubiquitous.</text>
</comment>
<comment type="disease" evidence="5">
    <disease id="DI-04488">
        <name>Progressive external ophthalmoplegia with mitochondrial DNA deletions, autosomal recessive 2</name>
        <acronym>PEOB2</acronym>
        <description>A form of progressive external ophthalmoplegia, a mitochondrial myopathy characterized by progressive paralysis of the levator palpebrae, orbicularis oculi, and extraocular muscles. PEOB2 patients manifest exercise intolerance, muscle weakness, and signs and symptoms of spinocerebellar ataxia, such as impaired gait and dysarthria. Some patients may have respiratory insufficiency.</description>
        <dbReference type="MIM" id="616479"/>
    </disease>
    <text>The disease is caused by variants affecting the gene represented in this entry.</text>
</comment>
<comment type="similarity">
    <text evidence="8">Belongs to the RNase H family.</text>
</comment>
<comment type="online information" name="Wikipedia">
    <link uri="https://en.wikipedia.org/wiki/RNase_H"/>
    <text>RNase H entry</text>
</comment>
<keyword id="KW-0002">3D-structure</keyword>
<keyword id="KW-0963">Cytoplasm</keyword>
<keyword id="KW-0225">Disease variant</keyword>
<keyword id="KW-0255">Endonuclease</keyword>
<keyword id="KW-0378">Hydrolase</keyword>
<keyword id="KW-0460">Magnesium</keyword>
<keyword id="KW-0479">Metal-binding</keyword>
<keyword id="KW-0540">Nuclease</keyword>
<keyword id="KW-1274">Primary mitochondrial disease</keyword>
<keyword id="KW-0935">Progressive external ophthalmoplegia</keyword>
<keyword id="KW-1267">Proteomics identification</keyword>
<keyword id="KW-1185">Reference proteome</keyword>
<gene>
    <name type="primary">RNASEH1</name>
    <name type="synonym">RNH1</name>
</gene>
<proteinExistence type="evidence at protein level"/>
<evidence type="ECO:0000255" key="1">
    <source>
        <dbReference type="PROSITE-ProRule" id="PRU00408"/>
    </source>
</evidence>
<evidence type="ECO:0000256" key="2">
    <source>
        <dbReference type="SAM" id="MobiDB-lite"/>
    </source>
</evidence>
<evidence type="ECO:0000269" key="3">
    <source>
    </source>
</evidence>
<evidence type="ECO:0000269" key="4">
    <source>
    </source>
</evidence>
<evidence type="ECO:0000269" key="5">
    <source>
    </source>
</evidence>
<evidence type="ECO:0000269" key="6">
    <source>
    </source>
</evidence>
<evidence type="ECO:0000269" key="7">
    <source ref="5"/>
</evidence>
<evidence type="ECO:0000305" key="8"/>
<evidence type="ECO:0007829" key="9">
    <source>
        <dbReference type="PDB" id="2QKB"/>
    </source>
</evidence>
<evidence type="ECO:0007829" key="10">
    <source>
        <dbReference type="PDB" id="3BSU"/>
    </source>
</evidence>
<evidence type="ECO:0007829" key="11">
    <source>
        <dbReference type="PDB" id="6VRD"/>
    </source>
</evidence>
<evidence type="ECO:0007829" key="12">
    <source>
        <dbReference type="PDB" id="8SWB"/>
    </source>
</evidence>
<name>RNH1_HUMAN</name>
<accession>O60930</accession>
<accession>B3KQU4</accession>
<accession>O60523</accession>
<accession>O60857</accession>
<accession>Q57Z93</accession>
<accession>Q5U0C1</accession>
<accession>Q6FHD4</accession>
<reference key="1">
    <citation type="journal article" date="1998" name="Genomics">
        <title>Cloning, expression, and mapping of ribonucleases H of human and mouse related to bacterial RNase HI.</title>
        <authorList>
            <person name="Cerritelli S.M."/>
            <person name="Crouch R.J."/>
        </authorList>
    </citation>
    <scope>NUCLEOTIDE SEQUENCE [MRNA]</scope>
    <scope>VARIANT PHE-4</scope>
</reference>
<reference key="2">
    <citation type="journal article" date="1998" name="Antisense Nucleic Acid Drug Dev.">
        <title>Molecular cloning and expression of cDNA for human RNase H.</title>
        <authorList>
            <person name="Wu H."/>
            <person name="Lima W.F."/>
            <person name="Crooke S.T."/>
        </authorList>
    </citation>
    <scope>NUCLEOTIDE SEQUENCE [MRNA]</scope>
</reference>
<reference key="3">
    <citation type="journal article" date="1998" name="Biol. Chem.">
        <title>Cloning, subcellular localization and functional expression of human RNase HII.</title>
        <authorList>
            <person name="Frank P."/>
            <person name="Braunshofer-Reiter C."/>
            <person name="Poltl A."/>
            <person name="Holzmann K."/>
        </authorList>
    </citation>
    <scope>NUCLEOTIDE SEQUENCE [MRNA]</scope>
</reference>
<reference key="4">
    <citation type="submission" date="2004-06" db="EMBL/GenBank/DDBJ databases">
        <title>Cloning of human full open reading frames in Gateway(TM) system entry vector (pDONR201).</title>
        <authorList>
            <person name="Halleck A."/>
            <person name="Ebert L."/>
            <person name="Mkoundinya M."/>
            <person name="Schick M."/>
            <person name="Eisenstein S."/>
            <person name="Neubert P."/>
            <person name="Kstrang K."/>
            <person name="Schatten R."/>
            <person name="Shen B."/>
            <person name="Henze S."/>
            <person name="Mar W."/>
            <person name="Korn B."/>
            <person name="Zuo D."/>
            <person name="Hu Y."/>
            <person name="LaBaer J."/>
        </authorList>
    </citation>
    <scope>NUCLEOTIDE SEQUENCE [LARGE SCALE MRNA]</scope>
</reference>
<reference key="5">
    <citation type="submission" date="2004-10" db="EMBL/GenBank/DDBJ databases">
        <title>Cloning of human full-length CDSs in BD Creator(TM) system donor vector.</title>
        <authorList>
            <person name="Kalnine N."/>
            <person name="Chen X."/>
            <person name="Rolfs A."/>
            <person name="Halleck A."/>
            <person name="Hines L."/>
            <person name="Eisenstein S."/>
            <person name="Koundinya M."/>
            <person name="Raphael J."/>
            <person name="Moreira D."/>
            <person name="Kelley T."/>
            <person name="LaBaer J."/>
            <person name="Lin Y."/>
            <person name="Phelan M."/>
            <person name="Farmer A."/>
        </authorList>
    </citation>
    <scope>NUCLEOTIDE SEQUENCE [LARGE SCALE MRNA]</scope>
    <scope>VARIANT PHE-4</scope>
</reference>
<reference key="6">
    <citation type="journal article" date="2005" name="DNA Res.">
        <title>Signal sequence and keyword trap in silico for selection of full-length human cDNAs encoding secretion or membrane proteins from oligo-capped cDNA libraries.</title>
        <authorList>
            <person name="Otsuki T."/>
            <person name="Ota T."/>
            <person name="Nishikawa T."/>
            <person name="Hayashi K."/>
            <person name="Suzuki Y."/>
            <person name="Yamamoto J."/>
            <person name="Wakamatsu A."/>
            <person name="Kimura K."/>
            <person name="Sakamoto K."/>
            <person name="Hatano N."/>
            <person name="Kawai Y."/>
            <person name="Ishii S."/>
            <person name="Saito K."/>
            <person name="Kojima S."/>
            <person name="Sugiyama T."/>
            <person name="Ono T."/>
            <person name="Okano K."/>
            <person name="Yoshikawa Y."/>
            <person name="Aotsuka S."/>
            <person name="Sasaki N."/>
            <person name="Hattori A."/>
            <person name="Okumura K."/>
            <person name="Nagai K."/>
            <person name="Sugano S."/>
            <person name="Isogai T."/>
        </authorList>
    </citation>
    <scope>NUCLEOTIDE SEQUENCE [LARGE SCALE MRNA]</scope>
    <source>
        <tissue>Ovary</tissue>
    </source>
</reference>
<reference key="7">
    <citation type="journal article" date="2005" name="Nature">
        <title>Generation and annotation of the DNA sequences of human chromosomes 2 and 4.</title>
        <authorList>
            <person name="Hillier L.W."/>
            <person name="Graves T.A."/>
            <person name="Fulton R.S."/>
            <person name="Fulton L.A."/>
            <person name="Pepin K.H."/>
            <person name="Minx P."/>
            <person name="Wagner-McPherson C."/>
            <person name="Layman D."/>
            <person name="Wylie K."/>
            <person name="Sekhon M."/>
            <person name="Becker M.C."/>
            <person name="Fewell G.A."/>
            <person name="Delehaunty K.D."/>
            <person name="Miner T.L."/>
            <person name="Nash W.E."/>
            <person name="Kremitzki C."/>
            <person name="Oddy L."/>
            <person name="Du H."/>
            <person name="Sun H."/>
            <person name="Bradshaw-Cordum H."/>
            <person name="Ali J."/>
            <person name="Carter J."/>
            <person name="Cordes M."/>
            <person name="Harris A."/>
            <person name="Isak A."/>
            <person name="van Brunt A."/>
            <person name="Nguyen C."/>
            <person name="Du F."/>
            <person name="Courtney L."/>
            <person name="Kalicki J."/>
            <person name="Ozersky P."/>
            <person name="Abbott S."/>
            <person name="Armstrong J."/>
            <person name="Belter E.A."/>
            <person name="Caruso L."/>
            <person name="Cedroni M."/>
            <person name="Cotton M."/>
            <person name="Davidson T."/>
            <person name="Desai A."/>
            <person name="Elliott G."/>
            <person name="Erb T."/>
            <person name="Fronick C."/>
            <person name="Gaige T."/>
            <person name="Haakenson W."/>
            <person name="Haglund K."/>
            <person name="Holmes A."/>
            <person name="Harkins R."/>
            <person name="Kim K."/>
            <person name="Kruchowski S.S."/>
            <person name="Strong C.M."/>
            <person name="Grewal N."/>
            <person name="Goyea E."/>
            <person name="Hou S."/>
            <person name="Levy A."/>
            <person name="Martinka S."/>
            <person name="Mead K."/>
            <person name="McLellan M.D."/>
            <person name="Meyer R."/>
            <person name="Randall-Maher J."/>
            <person name="Tomlinson C."/>
            <person name="Dauphin-Kohlberg S."/>
            <person name="Kozlowicz-Reilly A."/>
            <person name="Shah N."/>
            <person name="Swearengen-Shahid S."/>
            <person name="Snider J."/>
            <person name="Strong J.T."/>
            <person name="Thompson J."/>
            <person name="Yoakum M."/>
            <person name="Leonard S."/>
            <person name="Pearman C."/>
            <person name="Trani L."/>
            <person name="Radionenko M."/>
            <person name="Waligorski J.E."/>
            <person name="Wang C."/>
            <person name="Rock S.M."/>
            <person name="Tin-Wollam A.-M."/>
            <person name="Maupin R."/>
            <person name="Latreille P."/>
            <person name="Wendl M.C."/>
            <person name="Yang S.-P."/>
            <person name="Pohl C."/>
            <person name="Wallis J.W."/>
            <person name="Spieth J."/>
            <person name="Bieri T.A."/>
            <person name="Berkowicz N."/>
            <person name="Nelson J.O."/>
            <person name="Osborne J."/>
            <person name="Ding L."/>
            <person name="Meyer R."/>
            <person name="Sabo A."/>
            <person name="Shotland Y."/>
            <person name="Sinha P."/>
            <person name="Wohldmann P.E."/>
            <person name="Cook L.L."/>
            <person name="Hickenbotham M.T."/>
            <person name="Eldred J."/>
            <person name="Williams D."/>
            <person name="Jones T.A."/>
            <person name="She X."/>
            <person name="Ciccarelli F.D."/>
            <person name="Izaurralde E."/>
            <person name="Taylor J."/>
            <person name="Schmutz J."/>
            <person name="Myers R.M."/>
            <person name="Cox D.R."/>
            <person name="Huang X."/>
            <person name="McPherson J.D."/>
            <person name="Mardis E.R."/>
            <person name="Clifton S.W."/>
            <person name="Warren W.C."/>
            <person name="Chinwalla A.T."/>
            <person name="Eddy S.R."/>
            <person name="Marra M.A."/>
            <person name="Ovcharenko I."/>
            <person name="Furey T.S."/>
            <person name="Miller W."/>
            <person name="Eichler E.E."/>
            <person name="Bork P."/>
            <person name="Suyama M."/>
            <person name="Torrents D."/>
            <person name="Waterston R.H."/>
            <person name="Wilson R.K."/>
        </authorList>
    </citation>
    <scope>NUCLEOTIDE SEQUENCE [LARGE SCALE GENOMIC DNA]</scope>
</reference>
<reference key="8">
    <citation type="submission" date="2005-09" db="EMBL/GenBank/DDBJ databases">
        <authorList>
            <person name="Mural R.J."/>
            <person name="Istrail S."/>
            <person name="Sutton G.G."/>
            <person name="Florea L."/>
            <person name="Halpern A.L."/>
            <person name="Mobarry C.M."/>
            <person name="Lippert R."/>
            <person name="Walenz B."/>
            <person name="Shatkay H."/>
            <person name="Dew I."/>
            <person name="Miller J.R."/>
            <person name="Flanigan M.J."/>
            <person name="Edwards N.J."/>
            <person name="Bolanos R."/>
            <person name="Fasulo D."/>
            <person name="Halldorsson B.V."/>
            <person name="Hannenhalli S."/>
            <person name="Turner R."/>
            <person name="Yooseph S."/>
            <person name="Lu F."/>
            <person name="Nusskern D.R."/>
            <person name="Shue B.C."/>
            <person name="Zheng X.H."/>
            <person name="Zhong F."/>
            <person name="Delcher A.L."/>
            <person name="Huson D.H."/>
            <person name="Kravitz S.A."/>
            <person name="Mouchard L."/>
            <person name="Reinert K."/>
            <person name="Remington K.A."/>
            <person name="Clark A.G."/>
            <person name="Waterman M.S."/>
            <person name="Eichler E.E."/>
            <person name="Adams M.D."/>
            <person name="Hunkapiller M.W."/>
            <person name="Myers E.W."/>
            <person name="Venter J.C."/>
        </authorList>
    </citation>
    <scope>NUCLEOTIDE SEQUENCE [LARGE SCALE GENOMIC DNA]</scope>
</reference>
<reference key="9">
    <citation type="journal article" date="2004" name="Genome Res.">
        <title>The status, quality, and expansion of the NIH full-length cDNA project: the Mammalian Gene Collection (MGC).</title>
        <authorList>
            <consortium name="The MGC Project Team"/>
        </authorList>
    </citation>
    <scope>NUCLEOTIDE SEQUENCE [LARGE SCALE MRNA]</scope>
    <source>
        <tissue>Lung</tissue>
    </source>
</reference>
<reference key="10">
    <citation type="journal article" date="1999" name="J. Biol. Chem.">
        <title>Properties of cloned and expressed human RNase H1.</title>
        <authorList>
            <person name="Wu H."/>
            <person name="Lima W.F."/>
            <person name="Crooke S.T."/>
        </authorList>
    </citation>
    <scope>CHARACTERIZATION</scope>
</reference>
<reference key="11">
    <citation type="journal article" date="2011" name="Mol. Cell">
        <title>Human senataxin resolves RNA/DNA hybrids formed at transcriptional pause sites to promote Xrn2-dependent termination.</title>
        <authorList>
            <person name="Skourti-Stathaki K."/>
            <person name="Proudfoot N.J."/>
            <person name="Gromak N."/>
        </authorList>
    </citation>
    <scope>FUNCTION</scope>
</reference>
<reference key="12">
    <citation type="journal article" date="2011" name="Sci. Signal.">
        <title>System-wide temporal characterization of the proteome and phosphoproteome of human embryonic stem cell differentiation.</title>
        <authorList>
            <person name="Rigbolt K.T."/>
            <person name="Prokhorova T.A."/>
            <person name="Akimov V."/>
            <person name="Henningsen J."/>
            <person name="Johansen P.T."/>
            <person name="Kratchmarova I."/>
            <person name="Kassem M."/>
            <person name="Mann M."/>
            <person name="Olsen J.V."/>
            <person name="Blagoev B."/>
        </authorList>
    </citation>
    <scope>IDENTIFICATION BY MASS SPECTROMETRY [LARGE SCALE ANALYSIS]</scope>
</reference>
<reference key="13">
    <citation type="journal article" date="2013" name="J. Proteome Res.">
        <title>Toward a comprehensive characterization of a human cancer cell phosphoproteome.</title>
        <authorList>
            <person name="Zhou H."/>
            <person name="Di Palma S."/>
            <person name="Preisinger C."/>
            <person name="Peng M."/>
            <person name="Polat A.N."/>
            <person name="Heck A.J."/>
            <person name="Mohammed S."/>
        </authorList>
    </citation>
    <scope>IDENTIFICATION BY MASS SPECTROMETRY [LARGE SCALE ANALYSIS]</scope>
    <source>
        <tissue>Erythroleukemia</tissue>
    </source>
</reference>
<reference key="14">
    <citation type="journal article" date="2015" name="Am. J. Hum. Genet.">
        <title>RNASEH1 mutations impair mtDNA replication and cause adult-onset mitochondrial encephalomyopathy.</title>
        <authorList>
            <person name="Reyes A."/>
            <person name="Melchionda L."/>
            <person name="Nasca A."/>
            <person name="Carrara F."/>
            <person name="Lamantea E."/>
            <person name="Zanolini A."/>
            <person name="Lamperti C."/>
            <person name="Fang M."/>
            <person name="Zhang J."/>
            <person name="Ronchi D."/>
            <person name="Bonato S."/>
            <person name="Fagiolari G."/>
            <person name="Moggio M."/>
            <person name="Ghezzi D."/>
            <person name="Zeviani M."/>
        </authorList>
    </citation>
    <scope>INVOLVEMENT IN PEOB2</scope>
    <scope>VARIANTS PEOB2 ILE-142 AND VAL-185</scope>
    <scope>CHARACTERIZATION OF VARIANTS PEOB2 ILE-142 AND VAL-185</scope>
</reference>
<organism>
    <name type="scientific">Homo sapiens</name>
    <name type="common">Human</name>
    <dbReference type="NCBI Taxonomy" id="9606"/>
    <lineage>
        <taxon>Eukaryota</taxon>
        <taxon>Metazoa</taxon>
        <taxon>Chordata</taxon>
        <taxon>Craniata</taxon>
        <taxon>Vertebrata</taxon>
        <taxon>Euteleostomi</taxon>
        <taxon>Mammalia</taxon>
        <taxon>Eutheria</taxon>
        <taxon>Euarchontoglires</taxon>
        <taxon>Primates</taxon>
        <taxon>Haplorrhini</taxon>
        <taxon>Catarrhini</taxon>
        <taxon>Hominidae</taxon>
        <taxon>Homo</taxon>
    </lineage>
</organism>
<sequence length="286" mass="32064">MSWLLFLAHRVALAALPCRRGSRGFGMFYAVRRGRKTGVFLTWNECRAQVDRFPAARFKKFATEDEAWAFVRKSASPEVSEGHENQHGQESEAKASKRLREPLDGDGHESAEPYAKHMKPSVEPAPPVSRDTFSYMGDFVVVYTDGCCSSNGRRRPRAGIGVYWGPGHPLNVGIRLPGRQTNQRAEIHAACKAIEQAKTQNINKLVLYTDSMFTINGITNWVQGWKKNGWKTSAGKEVINKEDFVALERLTQGMDIQWMHVPGHSGFIGNEEADRLAREGAKQSED</sequence>
<feature type="chain" id="PRO_0000195433" description="Ribonuclease H1">
    <location>
        <begin position="1"/>
        <end position="286"/>
    </location>
</feature>
<feature type="domain" description="RNase H type-1" evidence="1">
    <location>
        <begin position="136"/>
        <end position="282"/>
    </location>
</feature>
<feature type="region of interest" description="Disordered" evidence="2">
    <location>
        <begin position="101"/>
        <end position="127"/>
    </location>
</feature>
<feature type="compositionally biased region" description="Basic and acidic residues" evidence="2">
    <location>
        <begin position="101"/>
        <end position="115"/>
    </location>
</feature>
<feature type="binding site" evidence="1">
    <location>
        <position position="145"/>
    </location>
    <ligand>
        <name>Mg(2+)</name>
        <dbReference type="ChEBI" id="CHEBI:18420"/>
        <label>1</label>
    </ligand>
</feature>
<feature type="binding site" evidence="1">
    <location>
        <position position="145"/>
    </location>
    <ligand>
        <name>Mg(2+)</name>
        <dbReference type="ChEBI" id="CHEBI:18420"/>
        <label>2</label>
    </ligand>
</feature>
<feature type="binding site" evidence="1">
    <location>
        <position position="186"/>
    </location>
    <ligand>
        <name>Mg(2+)</name>
        <dbReference type="ChEBI" id="CHEBI:18420"/>
        <label>1</label>
    </ligand>
</feature>
<feature type="binding site" evidence="1">
    <location>
        <position position="210"/>
    </location>
    <ligand>
        <name>Mg(2+)</name>
        <dbReference type="ChEBI" id="CHEBI:18420"/>
        <label>1</label>
    </ligand>
</feature>
<feature type="binding site" evidence="1">
    <location>
        <position position="274"/>
    </location>
    <ligand>
        <name>Mg(2+)</name>
        <dbReference type="ChEBI" id="CHEBI:18420"/>
        <label>2</label>
    </ligand>
</feature>
<feature type="sequence variant" id="VAR_023469" description="In dbSNP:rs1136545." evidence="6 7">
    <original>L</original>
    <variation>F</variation>
    <location>
        <position position="4"/>
    </location>
</feature>
<feature type="sequence variant" id="VAR_074561" description="In PEOB2; has partial residual endonuclease activity; dbSNP:rs766294940." evidence="5">
    <original>V</original>
    <variation>I</variation>
    <location>
        <position position="142"/>
    </location>
</feature>
<feature type="sequence variant" id="VAR_074562" description="In PEOB2; has partial residual endonuclease activity; dbSNP:rs1057517675." evidence="5">
    <original>A</original>
    <variation>V</variation>
    <location>
        <position position="185"/>
    </location>
</feature>
<feature type="sequence conflict" description="In Ref. 5; AAV38476." evidence="8" ref="5">
    <original>G</original>
    <variation>R</variation>
    <location>
        <position position="24"/>
    </location>
</feature>
<feature type="sequence conflict" description="In Ref. 4; CAG46619." evidence="8" ref="4">
    <original>R</original>
    <variation>K</variation>
    <location>
        <position position="33"/>
    </location>
</feature>
<feature type="sequence conflict" description="In Ref. 5; AAV38476." evidence="8" ref="5">
    <original>W</original>
    <variation>R</variation>
    <location>
        <position position="68"/>
    </location>
</feature>
<feature type="sequence conflict" description="In Ref. 3; CAA11835." evidence="8" ref="3">
    <original>Q</original>
    <variation>R</variation>
    <location>
        <position position="89"/>
    </location>
</feature>
<feature type="sequence conflict" description="In Ref. 4; CAG46619." evidence="8" ref="4">
    <original>M</original>
    <variation>I</variation>
    <location>
        <position position="136"/>
    </location>
</feature>
<feature type="sequence conflict" description="In Ref. 3; CAA11835." evidence="8" ref="3">
    <original>Q</original>
    <variation>R</variation>
    <location>
        <position position="223"/>
    </location>
</feature>
<feature type="strand" evidence="10">
    <location>
        <begin position="28"/>
        <end position="36"/>
    </location>
</feature>
<feature type="strand" evidence="10">
    <location>
        <begin position="38"/>
        <end position="42"/>
    </location>
</feature>
<feature type="helix" evidence="10">
    <location>
        <begin position="43"/>
        <end position="50"/>
    </location>
</feature>
<feature type="strand" evidence="10">
    <location>
        <begin position="57"/>
        <end position="63"/>
    </location>
</feature>
<feature type="helix" evidence="10">
    <location>
        <begin position="64"/>
        <end position="72"/>
    </location>
</feature>
<feature type="strand" evidence="11">
    <location>
        <begin position="139"/>
        <end position="149"/>
    </location>
</feature>
<feature type="turn" evidence="11">
    <location>
        <begin position="150"/>
        <end position="152"/>
    </location>
</feature>
<feature type="strand" evidence="11">
    <location>
        <begin position="153"/>
        <end position="155"/>
    </location>
</feature>
<feature type="strand" evidence="11">
    <location>
        <begin position="157"/>
        <end position="163"/>
    </location>
</feature>
<feature type="strand" evidence="11">
    <location>
        <begin position="172"/>
        <end position="175"/>
    </location>
</feature>
<feature type="helix" evidence="11">
    <location>
        <begin position="182"/>
        <end position="199"/>
    </location>
</feature>
<feature type="strand" evidence="11">
    <location>
        <begin position="204"/>
        <end position="210"/>
    </location>
</feature>
<feature type="helix" evidence="11">
    <location>
        <begin position="212"/>
        <end position="219"/>
    </location>
</feature>
<feature type="helix" evidence="11">
    <location>
        <begin position="221"/>
        <end position="228"/>
    </location>
</feature>
<feature type="strand" evidence="9">
    <location>
        <begin position="235"/>
        <end position="237"/>
    </location>
</feature>
<feature type="helix" evidence="11">
    <location>
        <begin position="241"/>
        <end position="251"/>
    </location>
</feature>
<feature type="strand" evidence="11">
    <location>
        <begin position="255"/>
        <end position="260"/>
    </location>
</feature>
<feature type="strand" evidence="12">
    <location>
        <begin position="263"/>
        <end position="266"/>
    </location>
</feature>
<feature type="helix" evidence="11">
    <location>
        <begin position="268"/>
        <end position="281"/>
    </location>
</feature>
<protein>
    <recommendedName>
        <fullName>Ribonuclease H1</fullName>
        <shortName>RNase H1</shortName>
        <ecNumber>3.1.26.4</ecNumber>
    </recommendedName>
    <alternativeName>
        <fullName>Ribonuclease H type II</fullName>
    </alternativeName>
</protein>